<protein>
    <recommendedName>
        <fullName evidence="1">Translation factor GUF1 homolog, chloroplastic</fullName>
        <ecNumber>3.6.5.-</ecNumber>
    </recommendedName>
    <alternativeName>
        <fullName evidence="1">Elongation factor 4 homolog</fullName>
        <shortName evidence="1">EF-4</shortName>
    </alternativeName>
    <alternativeName>
        <fullName evidence="1">GTPase GUF1 homolog</fullName>
    </alternativeName>
    <alternativeName>
        <fullName evidence="1">Ribosomal back-translocase</fullName>
    </alternativeName>
</protein>
<keyword id="KW-0150">Chloroplast</keyword>
<keyword id="KW-0342">GTP-binding</keyword>
<keyword id="KW-0378">Hydrolase</keyword>
<keyword id="KW-0547">Nucleotide-binding</keyword>
<keyword id="KW-0934">Plastid</keyword>
<keyword id="KW-0648">Protein biosynthesis</keyword>
<keyword id="KW-1185">Reference proteome</keyword>
<keyword id="KW-0809">Transit peptide</keyword>
<feature type="transit peptide" description="Chloroplast" evidence="1">
    <location>
        <begin position="1"/>
        <end position="47"/>
    </location>
</feature>
<feature type="chain" id="PRO_0000402918" description="Translation factor GUF1 homolog, chloroplastic">
    <location>
        <begin position="48"/>
        <end position="735"/>
    </location>
</feature>
<feature type="domain" description="tr-type G">
    <location>
        <begin position="137"/>
        <end position="319"/>
    </location>
</feature>
<feature type="region of interest" description="Disordered" evidence="2">
    <location>
        <begin position="1"/>
        <end position="38"/>
    </location>
</feature>
<feature type="region of interest" description="Disordered" evidence="2">
    <location>
        <begin position="106"/>
        <end position="126"/>
    </location>
</feature>
<feature type="compositionally biased region" description="Polar residues" evidence="2">
    <location>
        <begin position="11"/>
        <end position="38"/>
    </location>
</feature>
<feature type="compositionally biased region" description="Basic and acidic residues" evidence="2">
    <location>
        <begin position="106"/>
        <end position="115"/>
    </location>
</feature>
<feature type="binding site" evidence="1">
    <location>
        <begin position="146"/>
        <end position="153"/>
    </location>
    <ligand>
        <name>GTP</name>
        <dbReference type="ChEBI" id="CHEBI:37565"/>
    </ligand>
</feature>
<feature type="binding site" evidence="1">
    <location>
        <begin position="212"/>
        <end position="216"/>
    </location>
    <ligand>
        <name>GTP</name>
        <dbReference type="ChEBI" id="CHEBI:37565"/>
    </ligand>
</feature>
<feature type="binding site" evidence="1">
    <location>
        <begin position="266"/>
        <end position="269"/>
    </location>
    <ligand>
        <name>GTP</name>
        <dbReference type="ChEBI" id="CHEBI:37565"/>
    </ligand>
</feature>
<gene>
    <name type="ORF">PHYPADRAFT_158777</name>
</gene>
<organism>
    <name type="scientific">Physcomitrium patens</name>
    <name type="common">Spreading-leaved earth moss</name>
    <name type="synonym">Physcomitrella patens</name>
    <dbReference type="NCBI Taxonomy" id="3218"/>
    <lineage>
        <taxon>Eukaryota</taxon>
        <taxon>Viridiplantae</taxon>
        <taxon>Streptophyta</taxon>
        <taxon>Embryophyta</taxon>
        <taxon>Bryophyta</taxon>
        <taxon>Bryophytina</taxon>
        <taxon>Bryopsida</taxon>
        <taxon>Funariidae</taxon>
        <taxon>Funariales</taxon>
        <taxon>Funariaceae</taxon>
        <taxon>Physcomitrium</taxon>
    </lineage>
</organism>
<comment type="function">
    <text evidence="1">Promotes chloroplast protein synthesis. May act as a fidelity factor of the translation reaction, by catalyzing a one-codon backward translocation of tRNAs on improperly translocated ribosomes.</text>
</comment>
<comment type="catalytic activity">
    <reaction evidence="1">
        <text>GTP + H2O = GDP + phosphate + H(+)</text>
        <dbReference type="Rhea" id="RHEA:19669"/>
        <dbReference type="ChEBI" id="CHEBI:15377"/>
        <dbReference type="ChEBI" id="CHEBI:15378"/>
        <dbReference type="ChEBI" id="CHEBI:37565"/>
        <dbReference type="ChEBI" id="CHEBI:43474"/>
        <dbReference type="ChEBI" id="CHEBI:58189"/>
    </reaction>
</comment>
<comment type="subcellular location">
    <subcellularLocation>
        <location evidence="1">Plastid</location>
        <location evidence="1">Chloroplast</location>
    </subcellularLocation>
</comment>
<comment type="similarity">
    <text evidence="1">Belongs to the TRAFAC class translation factor GTPase superfamily. Classic translation factor GTPase family. LepA subfamily.</text>
</comment>
<accession>A9RFQ5</accession>
<evidence type="ECO:0000255" key="1">
    <source>
        <dbReference type="HAMAP-Rule" id="MF_03138"/>
    </source>
</evidence>
<evidence type="ECO:0000256" key="2">
    <source>
        <dbReference type="SAM" id="MobiDB-lite"/>
    </source>
</evidence>
<name>GUFP_PHYPA</name>
<reference key="1">
    <citation type="journal article" date="2008" name="Science">
        <title>The Physcomitrella genome reveals evolutionary insights into the conquest of land by plants.</title>
        <authorList>
            <person name="Rensing S.A."/>
            <person name="Lang D."/>
            <person name="Zimmer A.D."/>
            <person name="Terry A."/>
            <person name="Salamov A."/>
            <person name="Shapiro H."/>
            <person name="Nishiyama T."/>
            <person name="Perroud P.-F."/>
            <person name="Lindquist E.A."/>
            <person name="Kamisugi Y."/>
            <person name="Tanahashi T."/>
            <person name="Sakakibara K."/>
            <person name="Fujita T."/>
            <person name="Oishi K."/>
            <person name="Shin-I T."/>
            <person name="Kuroki Y."/>
            <person name="Toyoda A."/>
            <person name="Suzuki Y."/>
            <person name="Hashimoto S.-I."/>
            <person name="Yamaguchi K."/>
            <person name="Sugano S."/>
            <person name="Kohara Y."/>
            <person name="Fujiyama A."/>
            <person name="Anterola A."/>
            <person name="Aoki S."/>
            <person name="Ashton N."/>
            <person name="Barbazuk W.B."/>
            <person name="Barker E."/>
            <person name="Bennetzen J.L."/>
            <person name="Blankenship R."/>
            <person name="Cho S.H."/>
            <person name="Dutcher S.K."/>
            <person name="Estelle M."/>
            <person name="Fawcett J.A."/>
            <person name="Gundlach H."/>
            <person name="Hanada K."/>
            <person name="Heyl A."/>
            <person name="Hicks K.A."/>
            <person name="Hughes J."/>
            <person name="Lohr M."/>
            <person name="Mayer K."/>
            <person name="Melkozernov A."/>
            <person name="Murata T."/>
            <person name="Nelson D.R."/>
            <person name="Pils B."/>
            <person name="Prigge M."/>
            <person name="Reiss B."/>
            <person name="Renner T."/>
            <person name="Rombauts S."/>
            <person name="Rushton P.J."/>
            <person name="Sanderfoot A."/>
            <person name="Schween G."/>
            <person name="Shiu S.-H."/>
            <person name="Stueber K."/>
            <person name="Theodoulou F.L."/>
            <person name="Tu H."/>
            <person name="Van de Peer Y."/>
            <person name="Verrier P.J."/>
            <person name="Waters E."/>
            <person name="Wood A."/>
            <person name="Yang L."/>
            <person name="Cove D."/>
            <person name="Cuming A.C."/>
            <person name="Hasebe M."/>
            <person name="Lucas S."/>
            <person name="Mishler B.D."/>
            <person name="Reski R."/>
            <person name="Grigoriev I.V."/>
            <person name="Quatrano R.S."/>
            <person name="Boore J.L."/>
        </authorList>
    </citation>
    <scope>NUCLEOTIDE SEQUENCE [LARGE SCALE GENOMIC DNA]</scope>
    <source>
        <strain>cv. Gransden 2004</strain>
    </source>
</reference>
<sequence>MAVPTIPSPACISQSANGSIISTRRSTETNPRQHPSTSYRCAGRVVRRQGRSAISRSGSRYLHDLEAGRSLLKRVTLRRDWDSRLDEKDQYPRLGARAAATFEAKPENAEKDYSKNGKAANKGVDNGKDRLAKVPISNIRNFSIIAHIDHGKSTLADKLLQTTGTVLAREMKEQFLDNMDLERERGITIKLQAARMRYVDETGEAYCLNLIDTPGHVDFSYEVSRSLAACEGALLVVDASQGVEAQTLANVYLALESNLEIIPVLNKIDLPGADPERVRREIEEIIGLDCSEAILCSAKEGVGIPEILNAVVKKIPPPKDTAAEPLRALIFDSYYDSYRGVVVYFRVMDGRVKKGDYVQFMNSKTEYQVDEVGVLSPIQMPVNELYAGEVGYLSASIKSVADARVGDTITTVSRKAAQALPGYQLATPMVFCGLFPIDADQFVELREALEKLQLNDAALQFEPETSSAMGFGFRCGFLGLLHMEIVQERLEREYGLDLITTAPSVVYRVHCTDGTITECSNPSALPDAGKRKSIEEPYVRIELLTPKDYIGPLMELAQERRGEFKEMKFITENRASLVYMLPLGEMVGDFFDQLKSRSKGYASMEYSVKGYRESKLVKLDIRINDEAVDPLAVIVHQDKAYSVGRALTQQLKKLIPRQLFKIPIQACIGSKVIASENIAAMRKDVLAKCYGGDISRKKKLLKKQAEGKKRMKSLGRVDVPQDAFMAILRLEKEVV</sequence>
<dbReference type="EC" id="3.6.5.-"/>
<dbReference type="EMBL" id="DS544895">
    <property type="protein sequence ID" value="EDQ82334.1"/>
    <property type="molecule type" value="Genomic_DNA"/>
</dbReference>
<dbReference type="RefSeq" id="XP_001752830.1">
    <property type="nucleotide sequence ID" value="XM_001752778.1"/>
</dbReference>
<dbReference type="SMR" id="A9RFQ5"/>
<dbReference type="FunCoup" id="A9RFQ5">
    <property type="interactions" value="1156"/>
</dbReference>
<dbReference type="PaxDb" id="3218-PP1S6_407V6.1"/>
<dbReference type="EnsemblPlants" id="Pp3c26_13410V3.2">
    <property type="protein sequence ID" value="PAC:32917303.CDS.1"/>
    <property type="gene ID" value="Pp3c26_13410"/>
</dbReference>
<dbReference type="Gramene" id="Pp3c26_13410V3.2">
    <property type="protein sequence ID" value="PAC:32917303.CDS.1"/>
    <property type="gene ID" value="Pp3c26_13410"/>
</dbReference>
<dbReference type="eggNOG" id="KOG0462">
    <property type="taxonomic scope" value="Eukaryota"/>
</dbReference>
<dbReference type="HOGENOM" id="CLU_009995_3_3_1"/>
<dbReference type="InParanoid" id="A9RFQ5"/>
<dbReference type="OMA" id="EYSFVGY"/>
<dbReference type="OrthoDB" id="1074at2759"/>
<dbReference type="Proteomes" id="UP000006727">
    <property type="component" value="Chromosome 26"/>
</dbReference>
<dbReference type="GO" id="GO:0009507">
    <property type="term" value="C:chloroplast"/>
    <property type="evidence" value="ECO:0007669"/>
    <property type="project" value="UniProtKB-SubCell"/>
</dbReference>
<dbReference type="GO" id="GO:0005525">
    <property type="term" value="F:GTP binding"/>
    <property type="evidence" value="ECO:0007669"/>
    <property type="project" value="UniProtKB-UniRule"/>
</dbReference>
<dbReference type="GO" id="GO:0003924">
    <property type="term" value="F:GTPase activity"/>
    <property type="evidence" value="ECO:0007669"/>
    <property type="project" value="UniProtKB-UniRule"/>
</dbReference>
<dbReference type="GO" id="GO:0043022">
    <property type="term" value="F:ribosome binding"/>
    <property type="evidence" value="ECO:0000318"/>
    <property type="project" value="GO_Central"/>
</dbReference>
<dbReference type="GO" id="GO:0045727">
    <property type="term" value="P:positive regulation of translation"/>
    <property type="evidence" value="ECO:0000318"/>
    <property type="project" value="GO_Central"/>
</dbReference>
<dbReference type="GO" id="GO:0006412">
    <property type="term" value="P:translation"/>
    <property type="evidence" value="ECO:0007669"/>
    <property type="project" value="UniProtKB-KW"/>
</dbReference>
<dbReference type="CDD" id="cd03699">
    <property type="entry name" value="EF4_II"/>
    <property type="match status" value="1"/>
</dbReference>
<dbReference type="CDD" id="cd16260">
    <property type="entry name" value="EF4_III"/>
    <property type="match status" value="1"/>
</dbReference>
<dbReference type="CDD" id="cd01890">
    <property type="entry name" value="LepA"/>
    <property type="match status" value="1"/>
</dbReference>
<dbReference type="CDD" id="cd03709">
    <property type="entry name" value="lepA_C"/>
    <property type="match status" value="1"/>
</dbReference>
<dbReference type="FunFam" id="3.40.50.300:FF:000078">
    <property type="entry name" value="Elongation factor 4"/>
    <property type="match status" value="1"/>
</dbReference>
<dbReference type="FunFam" id="2.40.30.10:FF:000015">
    <property type="entry name" value="Translation factor GUF1, mitochondrial"/>
    <property type="match status" value="1"/>
</dbReference>
<dbReference type="FunFam" id="3.30.70.240:FF:000007">
    <property type="entry name" value="Translation factor GUF1, mitochondrial"/>
    <property type="match status" value="1"/>
</dbReference>
<dbReference type="FunFam" id="3.30.70.2570:FF:000001">
    <property type="entry name" value="Translation factor GUF1, mitochondrial"/>
    <property type="match status" value="1"/>
</dbReference>
<dbReference type="FunFam" id="3.30.70.870:FF:000004">
    <property type="entry name" value="Translation factor GUF1, mitochondrial"/>
    <property type="match status" value="1"/>
</dbReference>
<dbReference type="Gene3D" id="3.30.70.240">
    <property type="match status" value="1"/>
</dbReference>
<dbReference type="Gene3D" id="3.30.70.2570">
    <property type="entry name" value="Elongation factor 4, C-terminal domain"/>
    <property type="match status" value="1"/>
</dbReference>
<dbReference type="Gene3D" id="3.30.70.870">
    <property type="entry name" value="Elongation Factor G (Translational Gtpase), domain 3"/>
    <property type="match status" value="1"/>
</dbReference>
<dbReference type="Gene3D" id="3.40.50.300">
    <property type="entry name" value="P-loop containing nucleotide triphosphate hydrolases"/>
    <property type="match status" value="1"/>
</dbReference>
<dbReference type="Gene3D" id="2.40.30.10">
    <property type="entry name" value="Translation factors"/>
    <property type="match status" value="1"/>
</dbReference>
<dbReference type="HAMAP" id="MF_03138">
    <property type="entry name" value="GUFP"/>
    <property type="match status" value="1"/>
</dbReference>
<dbReference type="HAMAP" id="MF_00071">
    <property type="entry name" value="LepA"/>
    <property type="match status" value="1"/>
</dbReference>
<dbReference type="InterPro" id="IPR006297">
    <property type="entry name" value="EF-4"/>
</dbReference>
<dbReference type="InterPro" id="IPR035647">
    <property type="entry name" value="EFG_III/V"/>
</dbReference>
<dbReference type="InterPro" id="IPR000640">
    <property type="entry name" value="EFG_V-like"/>
</dbReference>
<dbReference type="InterPro" id="IPR004161">
    <property type="entry name" value="EFTu-like_2"/>
</dbReference>
<dbReference type="InterPro" id="IPR031157">
    <property type="entry name" value="G_TR_CS"/>
</dbReference>
<dbReference type="InterPro" id="IPR027518">
    <property type="entry name" value="GUFP"/>
</dbReference>
<dbReference type="InterPro" id="IPR038363">
    <property type="entry name" value="LepA_C_sf"/>
</dbReference>
<dbReference type="InterPro" id="IPR013842">
    <property type="entry name" value="LepA_CTD"/>
</dbReference>
<dbReference type="InterPro" id="IPR035654">
    <property type="entry name" value="LepA_IV"/>
</dbReference>
<dbReference type="InterPro" id="IPR027417">
    <property type="entry name" value="P-loop_NTPase"/>
</dbReference>
<dbReference type="InterPro" id="IPR005225">
    <property type="entry name" value="Small_GTP-bd"/>
</dbReference>
<dbReference type="InterPro" id="IPR000795">
    <property type="entry name" value="T_Tr_GTP-bd_dom"/>
</dbReference>
<dbReference type="InterPro" id="IPR009000">
    <property type="entry name" value="Transl_B-barrel_sf"/>
</dbReference>
<dbReference type="NCBIfam" id="TIGR01393">
    <property type="entry name" value="lepA"/>
    <property type="match status" value="1"/>
</dbReference>
<dbReference type="NCBIfam" id="TIGR00231">
    <property type="entry name" value="small_GTP"/>
    <property type="match status" value="1"/>
</dbReference>
<dbReference type="PANTHER" id="PTHR43512:SF4">
    <property type="entry name" value="TRANSLATION FACTOR GUF1 HOMOLOG, CHLOROPLASTIC"/>
    <property type="match status" value="1"/>
</dbReference>
<dbReference type="PANTHER" id="PTHR43512">
    <property type="entry name" value="TRANSLATION FACTOR GUF1-RELATED"/>
    <property type="match status" value="1"/>
</dbReference>
<dbReference type="Pfam" id="PF00679">
    <property type="entry name" value="EFG_C"/>
    <property type="match status" value="1"/>
</dbReference>
<dbReference type="Pfam" id="PF00009">
    <property type="entry name" value="GTP_EFTU"/>
    <property type="match status" value="1"/>
</dbReference>
<dbReference type="Pfam" id="PF03144">
    <property type="entry name" value="GTP_EFTU_D2"/>
    <property type="match status" value="1"/>
</dbReference>
<dbReference type="Pfam" id="PF06421">
    <property type="entry name" value="LepA_C"/>
    <property type="match status" value="1"/>
</dbReference>
<dbReference type="PRINTS" id="PR00315">
    <property type="entry name" value="ELONGATNFCT"/>
</dbReference>
<dbReference type="SMART" id="SM00838">
    <property type="entry name" value="EFG_C"/>
    <property type="match status" value="1"/>
</dbReference>
<dbReference type="SUPFAM" id="SSF54980">
    <property type="entry name" value="EF-G C-terminal domain-like"/>
    <property type="match status" value="2"/>
</dbReference>
<dbReference type="SUPFAM" id="SSF52540">
    <property type="entry name" value="P-loop containing nucleoside triphosphate hydrolases"/>
    <property type="match status" value="1"/>
</dbReference>
<dbReference type="SUPFAM" id="SSF50447">
    <property type="entry name" value="Translation proteins"/>
    <property type="match status" value="1"/>
</dbReference>
<dbReference type="PROSITE" id="PS00301">
    <property type="entry name" value="G_TR_1"/>
    <property type="match status" value="1"/>
</dbReference>
<dbReference type="PROSITE" id="PS51722">
    <property type="entry name" value="G_TR_2"/>
    <property type="match status" value="1"/>
</dbReference>
<proteinExistence type="inferred from homology"/>